<gene>
    <name type="primary">PSR</name>
</gene>
<accession>Q6Q4H1</accession>
<sequence>MDKRTDDAVRETKLKARPELKGDEGWTRLGYANNFDLSYQHIKDTLPRIHCKSISHDEFIARYEKPRIPVILTGCTDSWLANQKWKLSSLAKKYRNQKFKVGEDNDGFSVKMKMKYYIEYLKHQKDDSPLYIFDGSYGEHPKKRKLLDDYHPPSFFQDDLFKYAGEKRRPPYRWIVIGPARSGTGIHIDPLGTSAWNALISGHKRWMMFPTETPKHLLEVSKQDGQHQSGEGIQWFVKVYPKVKSPTWPKEYAPLEIIQHPGETVFVPGGWWHVVLNLDQTVAVTQNFSSPTNFHVVWHKTVRGRPKLSQKWLRALKIYRPEIARIAAEVDLLRQSGLASDSSSDSSSSSSSSSSEESNSESEESTADSIPEQSESKRRKVDAVE</sequence>
<comment type="function">
    <text evidence="1">Dioxygenase that can both act as a histone arginine demethylase and a lysyl-hydroxylase.</text>
</comment>
<comment type="cofactor">
    <cofactor evidence="1">
        <name>Fe(2+)</name>
        <dbReference type="ChEBI" id="CHEBI:29033"/>
    </cofactor>
    <text evidence="1">Binds 1 Fe(2+) ion per subunit.</text>
</comment>
<comment type="subcellular location">
    <subcellularLocation>
        <location evidence="4">Nucleus</location>
    </subcellularLocation>
</comment>
<comment type="similarity">
    <text evidence="5">Belongs to the JMJD6 family.</text>
</comment>
<comment type="caution">
    <text evidence="5">Was initially thought to constitute the phosphatidylserine receptor, a receptor that mediates recognition of phosphatidylserine, a specific marker only present at the surface of apoptotic cells, and participates in apoptotic cell phagocytosis. However, its nuclear localization and the fact that it is not involved in phagocytosis during apoptosis strongly suggest that it does not constitute the receptor for phosphatidylserine and is not involved in apoptotic cell removal.</text>
</comment>
<keyword id="KW-0156">Chromatin regulator</keyword>
<keyword id="KW-0223">Dioxygenase</keyword>
<keyword id="KW-0408">Iron</keyword>
<keyword id="KW-0479">Metal-binding</keyword>
<keyword id="KW-0539">Nucleus</keyword>
<keyword id="KW-0560">Oxidoreductase</keyword>
<keyword id="KW-1185">Reference proteome</keyword>
<keyword id="KW-0804">Transcription</keyword>
<keyword id="KW-0805">Transcription regulation</keyword>
<organism>
    <name type="scientific">Hydra vulgaris</name>
    <name type="common">Hydra</name>
    <name type="synonym">Hydra attenuata</name>
    <dbReference type="NCBI Taxonomy" id="6087"/>
    <lineage>
        <taxon>Eukaryota</taxon>
        <taxon>Metazoa</taxon>
        <taxon>Cnidaria</taxon>
        <taxon>Hydrozoa</taxon>
        <taxon>Hydroidolina</taxon>
        <taxon>Anthoathecata</taxon>
        <taxon>Aplanulata</taxon>
        <taxon>Hydridae</taxon>
        <taxon>Hydra</taxon>
    </lineage>
</organism>
<protein>
    <recommendedName>
        <fullName>Bifunctional arginine demethylase and lysyl-hydroxylase PSR</fullName>
        <ecNumber>1.14.11.-</ecNumber>
    </recommendedName>
    <alternativeName>
        <fullName>Phosphatidylserine receptor</fullName>
    </alternativeName>
</protein>
<evidence type="ECO:0000250" key="1"/>
<evidence type="ECO:0000255" key="2">
    <source>
        <dbReference type="PROSITE-ProRule" id="PRU00538"/>
    </source>
</evidence>
<evidence type="ECO:0000256" key="3">
    <source>
        <dbReference type="SAM" id="MobiDB-lite"/>
    </source>
</evidence>
<evidence type="ECO:0000269" key="4">
    <source>
    </source>
</evidence>
<evidence type="ECO:0000305" key="5"/>
<feature type="chain" id="PRO_0000129380" description="Bifunctional arginine demethylase and lysyl-hydroxylase PSR">
    <location>
        <begin position="1"/>
        <end position="385"/>
    </location>
</feature>
<feature type="domain" description="JmjC" evidence="2">
    <location>
        <begin position="141"/>
        <end position="305"/>
    </location>
</feature>
<feature type="region of interest" description="Disordered" evidence="3">
    <location>
        <begin position="337"/>
        <end position="385"/>
    </location>
</feature>
<feature type="short sequence motif" description="Nuclear localization signal">
    <location>
        <begin position="377"/>
        <end position="380"/>
    </location>
</feature>
<feature type="compositionally biased region" description="Low complexity" evidence="3">
    <location>
        <begin position="340"/>
        <end position="357"/>
    </location>
</feature>
<feature type="binding site" evidence="1">
    <location>
        <position position="184"/>
    </location>
    <ligand>
        <name>substrate</name>
    </ligand>
</feature>
<feature type="binding site" evidence="2">
    <location>
        <position position="187"/>
    </location>
    <ligand>
        <name>Fe cation</name>
        <dbReference type="ChEBI" id="CHEBI:24875"/>
        <note>catalytic</note>
    </ligand>
</feature>
<feature type="binding site" evidence="2">
    <location>
        <position position="189"/>
    </location>
    <ligand>
        <name>Fe cation</name>
        <dbReference type="ChEBI" id="CHEBI:24875"/>
        <note>catalytic</note>
    </ligand>
</feature>
<feature type="binding site" evidence="1">
    <location>
        <position position="197"/>
    </location>
    <ligand>
        <name>2-oxoglutarate</name>
        <dbReference type="ChEBI" id="CHEBI:16810"/>
    </ligand>
</feature>
<feature type="binding site" evidence="1">
    <location>
        <position position="204"/>
    </location>
    <ligand>
        <name>substrate</name>
    </ligand>
</feature>
<feature type="binding site" evidence="2">
    <location>
        <position position="273"/>
    </location>
    <ligand>
        <name>Fe cation</name>
        <dbReference type="ChEBI" id="CHEBI:24875"/>
        <note>catalytic</note>
    </ligand>
</feature>
<feature type="binding site" evidence="1">
    <location>
        <position position="285"/>
    </location>
    <ligand>
        <name>2-oxoglutarate</name>
        <dbReference type="ChEBI" id="CHEBI:16810"/>
    </ligand>
</feature>
<feature type="mutagenesis site" description="Does not affect nuclear localization." evidence="4">
    <location>
        <begin position="142"/>
        <end position="145"/>
    </location>
</feature>
<feature type="mutagenesis site" description="Does not affect nuclear localization." evidence="4">
    <location>
        <begin position="167"/>
        <end position="169"/>
    </location>
</feature>
<feature type="mutagenesis site" description="Abolishes nuclear localization." evidence="4">
    <location>
        <begin position="377"/>
        <end position="380"/>
    </location>
</feature>
<proteinExistence type="evidence at protein level"/>
<dbReference type="EC" id="1.14.11.-"/>
<dbReference type="EMBL" id="AY559448">
    <property type="protein sequence ID" value="AAS59176.1"/>
    <property type="molecule type" value="mRNA"/>
</dbReference>
<dbReference type="RefSeq" id="NP_001296707.1">
    <property type="nucleotide sequence ID" value="NM_001309778.1"/>
</dbReference>
<dbReference type="RefSeq" id="XP_002154420.3">
    <property type="nucleotide sequence ID" value="XM_002154384.3"/>
</dbReference>
<dbReference type="SMR" id="Q6Q4H1"/>
<dbReference type="EnsemblMetazoa" id="NM_001309778.1">
    <property type="protein sequence ID" value="NP_001296707.1"/>
    <property type="gene ID" value="LOC100209631"/>
</dbReference>
<dbReference type="GeneID" id="100209631"/>
<dbReference type="KEGG" id="hmg:100209631"/>
<dbReference type="OMA" id="RFHEKEM"/>
<dbReference type="OrthoDB" id="424465at2759"/>
<dbReference type="Proteomes" id="UP000694840">
    <property type="component" value="Unplaced"/>
</dbReference>
<dbReference type="GO" id="GO:0005737">
    <property type="term" value="C:cytoplasm"/>
    <property type="evidence" value="ECO:0007669"/>
    <property type="project" value="TreeGrafter"/>
</dbReference>
<dbReference type="GO" id="GO:0005634">
    <property type="term" value="C:nucleus"/>
    <property type="evidence" value="ECO:0000314"/>
    <property type="project" value="UniProtKB"/>
</dbReference>
<dbReference type="GO" id="GO:0033749">
    <property type="term" value="F:histone H4R3 demethylase activity"/>
    <property type="evidence" value="ECO:0007669"/>
    <property type="project" value="TreeGrafter"/>
</dbReference>
<dbReference type="GO" id="GO:0046872">
    <property type="term" value="F:metal ion binding"/>
    <property type="evidence" value="ECO:0007669"/>
    <property type="project" value="UniProtKB-KW"/>
</dbReference>
<dbReference type="GO" id="GO:0106140">
    <property type="term" value="F:P-TEFb complex binding"/>
    <property type="evidence" value="ECO:0007669"/>
    <property type="project" value="TreeGrafter"/>
</dbReference>
<dbReference type="GO" id="GO:0070815">
    <property type="term" value="F:peptidyl-lysine 5-dioxygenase activity"/>
    <property type="evidence" value="ECO:0000250"/>
    <property type="project" value="UniProtKB"/>
</dbReference>
<dbReference type="GO" id="GO:0018395">
    <property type="term" value="P:peptidyl-lysine hydroxylation to 5-hydroxy-L-lysine"/>
    <property type="evidence" value="ECO:0000250"/>
    <property type="project" value="UniProtKB"/>
</dbReference>
<dbReference type="GO" id="GO:0006909">
    <property type="term" value="P:phagocytosis"/>
    <property type="evidence" value="ECO:0007669"/>
    <property type="project" value="TreeGrafter"/>
</dbReference>
<dbReference type="FunFam" id="1.20.1280.270:FF:000001">
    <property type="entry name" value="Bifunctional arginine demethylase and lysyl-hydroxylase JMJD6"/>
    <property type="match status" value="1"/>
</dbReference>
<dbReference type="FunFam" id="2.60.120.650:FF:000010">
    <property type="entry name" value="bifunctional arginine demethylase and lysyl-hydroxylase JMJD6 isoform X2"/>
    <property type="match status" value="1"/>
</dbReference>
<dbReference type="Gene3D" id="1.20.1280.270">
    <property type="match status" value="1"/>
</dbReference>
<dbReference type="Gene3D" id="2.60.120.650">
    <property type="entry name" value="Cupin"/>
    <property type="match status" value="1"/>
</dbReference>
<dbReference type="InterPro" id="IPR003347">
    <property type="entry name" value="JmjC_dom"/>
</dbReference>
<dbReference type="InterPro" id="IPR050910">
    <property type="entry name" value="JMJD6_ArgDemeth/LysHydrox"/>
</dbReference>
<dbReference type="PANTHER" id="PTHR12480">
    <property type="entry name" value="ARGININE DEMETHYLASE AND LYSYL-HYDROXYLASE JMJD"/>
    <property type="match status" value="1"/>
</dbReference>
<dbReference type="PANTHER" id="PTHR12480:SF32">
    <property type="entry name" value="BIFUNCTIONAL ARGININE DEMETHYLASE AND LYSYL-HYDROXYLASE JMJD6"/>
    <property type="match status" value="1"/>
</dbReference>
<dbReference type="Pfam" id="PF02373">
    <property type="entry name" value="JmjC"/>
    <property type="match status" value="1"/>
</dbReference>
<dbReference type="SMART" id="SM00558">
    <property type="entry name" value="JmjC"/>
    <property type="match status" value="1"/>
</dbReference>
<dbReference type="SUPFAM" id="SSF51197">
    <property type="entry name" value="Clavaminate synthase-like"/>
    <property type="match status" value="1"/>
</dbReference>
<dbReference type="PROSITE" id="PS51184">
    <property type="entry name" value="JMJC"/>
    <property type="match status" value="1"/>
</dbReference>
<name>JMJD6_HYDVU</name>
<reference key="1">
    <citation type="journal article" date="2004" name="BMC Cell Biol.">
        <title>The phosphatidylserine receptor from Hydra is a nuclear protein with potential Fe(II) dependent oxygenase activity.</title>
        <authorList>
            <person name="Cikala M."/>
            <person name="Alexandrova O."/>
            <person name="David C.N."/>
            <person name="Proeschel M."/>
            <person name="Stiening B."/>
            <person name="Cramer P."/>
            <person name="Boettger A."/>
        </authorList>
    </citation>
    <scope>NUCLEOTIDE SEQUENCE [MRNA]</scope>
    <scope>LACK OF INVOLVEMENT IN PHAGOCYTOSIS</scope>
    <scope>SUBCELLULAR LOCATION</scope>
    <scope>MUTAGENESIS OF 142-LYS--LYS-145; 167-LYS--ARG-169 AND 377-LYS--LYS-380</scope>
</reference>